<keyword id="KW-0021">Allosteric enzyme</keyword>
<keyword id="KW-0067">ATP-binding</keyword>
<keyword id="KW-0963">Cytoplasm</keyword>
<keyword id="KW-0418">Kinase</keyword>
<keyword id="KW-0547">Nucleotide-binding</keyword>
<keyword id="KW-0665">Pyrimidine biosynthesis</keyword>
<keyword id="KW-0808">Transferase</keyword>
<reference key="1">
    <citation type="journal article" date="2001" name="Lancet">
        <title>Whole genome sequencing of meticillin-resistant Staphylococcus aureus.</title>
        <authorList>
            <person name="Kuroda M."/>
            <person name="Ohta T."/>
            <person name="Uchiyama I."/>
            <person name="Baba T."/>
            <person name="Yuzawa H."/>
            <person name="Kobayashi I."/>
            <person name="Cui L."/>
            <person name="Oguchi A."/>
            <person name="Aoki K."/>
            <person name="Nagai Y."/>
            <person name="Lian J.-Q."/>
            <person name="Ito T."/>
            <person name="Kanamori M."/>
            <person name="Matsumaru H."/>
            <person name="Maruyama A."/>
            <person name="Murakami H."/>
            <person name="Hosoyama A."/>
            <person name="Mizutani-Ui Y."/>
            <person name="Takahashi N.K."/>
            <person name="Sawano T."/>
            <person name="Inoue R."/>
            <person name="Kaito C."/>
            <person name="Sekimizu K."/>
            <person name="Hirakawa H."/>
            <person name="Kuhara S."/>
            <person name="Goto S."/>
            <person name="Yabuzaki J."/>
            <person name="Kanehisa M."/>
            <person name="Yamashita A."/>
            <person name="Oshima K."/>
            <person name="Furuya K."/>
            <person name="Yoshino C."/>
            <person name="Shiba T."/>
            <person name="Hattori M."/>
            <person name="Ogasawara N."/>
            <person name="Hayashi H."/>
            <person name="Hiramatsu K."/>
        </authorList>
    </citation>
    <scope>NUCLEOTIDE SEQUENCE [LARGE SCALE GENOMIC DNA]</scope>
    <source>
        <strain>N315</strain>
    </source>
</reference>
<reference key="2">
    <citation type="submission" date="2007-10" db="UniProtKB">
        <title>Shotgun proteomic analysis of total and membrane protein extracts of S. aureus strain N315.</title>
        <authorList>
            <person name="Vaezzadeh A.R."/>
            <person name="Deshusses J."/>
            <person name="Lescuyer P."/>
            <person name="Hochstrasser D.F."/>
        </authorList>
    </citation>
    <scope>IDENTIFICATION BY MASS SPECTROMETRY [LARGE SCALE ANALYSIS]</scope>
    <source>
        <strain>N315</strain>
    </source>
</reference>
<protein>
    <recommendedName>
        <fullName evidence="1">Uridylate kinase</fullName>
        <shortName evidence="1">UK</shortName>
        <ecNumber evidence="1">2.7.4.22</ecNumber>
    </recommendedName>
    <alternativeName>
        <fullName evidence="1">Uridine monophosphate kinase</fullName>
        <shortName evidence="1">UMP kinase</shortName>
        <shortName evidence="1">UMPK</shortName>
    </alternativeName>
</protein>
<organism>
    <name type="scientific">Staphylococcus aureus (strain N315)</name>
    <dbReference type="NCBI Taxonomy" id="158879"/>
    <lineage>
        <taxon>Bacteria</taxon>
        <taxon>Bacillati</taxon>
        <taxon>Bacillota</taxon>
        <taxon>Bacilli</taxon>
        <taxon>Bacillales</taxon>
        <taxon>Staphylococcaceae</taxon>
        <taxon>Staphylococcus</taxon>
    </lineage>
</organism>
<comment type="function">
    <text evidence="1">Catalyzes the reversible phosphorylation of UMP to UDP.</text>
</comment>
<comment type="catalytic activity">
    <reaction evidence="1">
        <text>UMP + ATP = UDP + ADP</text>
        <dbReference type="Rhea" id="RHEA:24400"/>
        <dbReference type="ChEBI" id="CHEBI:30616"/>
        <dbReference type="ChEBI" id="CHEBI:57865"/>
        <dbReference type="ChEBI" id="CHEBI:58223"/>
        <dbReference type="ChEBI" id="CHEBI:456216"/>
        <dbReference type="EC" id="2.7.4.22"/>
    </reaction>
</comment>
<comment type="activity regulation">
    <text evidence="1">Allosterically activated by GTP. Inhibited by UTP.</text>
</comment>
<comment type="pathway">
    <text evidence="1">Pyrimidine metabolism; CTP biosynthesis via de novo pathway; UDP from UMP (UMPK route): step 1/1.</text>
</comment>
<comment type="subunit">
    <text evidence="1">Homohexamer.</text>
</comment>
<comment type="subcellular location">
    <subcellularLocation>
        <location evidence="1">Cytoplasm</location>
    </subcellularLocation>
</comment>
<comment type="similarity">
    <text evidence="1">Belongs to the UMP kinase family.</text>
</comment>
<accession>P65936</accession>
<accession>P59006</accession>
<accession>Q99UL3</accession>
<gene>
    <name evidence="1" type="primary">pyrH</name>
    <name type="synonym">smbA</name>
    <name type="ordered locus">SA1101</name>
</gene>
<feature type="chain" id="PRO_0000143883" description="Uridylate kinase">
    <location>
        <begin position="1"/>
        <end position="240"/>
    </location>
</feature>
<feature type="region of interest" description="Involved in allosteric activation by GTP" evidence="1">
    <location>
        <begin position="21"/>
        <end position="26"/>
    </location>
</feature>
<feature type="binding site" evidence="1">
    <location>
        <begin position="13"/>
        <end position="16"/>
    </location>
    <ligand>
        <name>ATP</name>
        <dbReference type="ChEBI" id="CHEBI:30616"/>
    </ligand>
</feature>
<feature type="binding site" evidence="1">
    <location>
        <position position="55"/>
    </location>
    <ligand>
        <name>UMP</name>
        <dbReference type="ChEBI" id="CHEBI:57865"/>
    </ligand>
</feature>
<feature type="binding site" evidence="1">
    <location>
        <position position="56"/>
    </location>
    <ligand>
        <name>ATP</name>
        <dbReference type="ChEBI" id="CHEBI:30616"/>
    </ligand>
</feature>
<feature type="binding site" evidence="1">
    <location>
        <position position="60"/>
    </location>
    <ligand>
        <name>ATP</name>
        <dbReference type="ChEBI" id="CHEBI:30616"/>
    </ligand>
</feature>
<feature type="binding site" evidence="1">
    <location>
        <position position="75"/>
    </location>
    <ligand>
        <name>UMP</name>
        <dbReference type="ChEBI" id="CHEBI:57865"/>
    </ligand>
</feature>
<feature type="binding site" evidence="1">
    <location>
        <begin position="136"/>
        <end position="143"/>
    </location>
    <ligand>
        <name>UMP</name>
        <dbReference type="ChEBI" id="CHEBI:57865"/>
    </ligand>
</feature>
<feature type="binding site" evidence="1">
    <location>
        <position position="164"/>
    </location>
    <ligand>
        <name>ATP</name>
        <dbReference type="ChEBI" id="CHEBI:30616"/>
    </ligand>
</feature>
<feature type="binding site" evidence="1">
    <location>
        <position position="170"/>
    </location>
    <ligand>
        <name>ATP</name>
        <dbReference type="ChEBI" id="CHEBI:30616"/>
    </ligand>
</feature>
<feature type="binding site" evidence="1">
    <location>
        <position position="173"/>
    </location>
    <ligand>
        <name>ATP</name>
        <dbReference type="ChEBI" id="CHEBI:30616"/>
    </ligand>
</feature>
<evidence type="ECO:0000255" key="1">
    <source>
        <dbReference type="HAMAP-Rule" id="MF_01220"/>
    </source>
</evidence>
<sequence length="240" mass="26145">MAQISKYKRVVLKLSGEALAGEKGFGINPVIIKSVAEQVAEVAKMDCEIAVIVGGGNIWRGKTGSDLGMDRGTADYMGMLATVMNALALQDSLEQLDCDTRVLTSIEMKQVAEPYIRRRAIRHLEKKRVVIFAAGIGNPYFSTDTTAALRAAEVEADVILMGKNNVDGVYSADPKVNKDAVKYEHLTHIQMLQEGLQVMDSTASSFCMDNNIPLTVFSIMEEGNIKRAVMGEKIGTLITK</sequence>
<dbReference type="EC" id="2.7.4.22" evidence="1"/>
<dbReference type="EMBL" id="BA000018">
    <property type="protein sequence ID" value="BAB42353.1"/>
    <property type="molecule type" value="Genomic_DNA"/>
</dbReference>
<dbReference type="PIR" id="E89899">
    <property type="entry name" value="E89899"/>
</dbReference>
<dbReference type="RefSeq" id="WP_000057330.1">
    <property type="nucleotide sequence ID" value="NC_002745.2"/>
</dbReference>
<dbReference type="SMR" id="P65936"/>
<dbReference type="EnsemblBacteria" id="BAB42353">
    <property type="protein sequence ID" value="BAB42353"/>
    <property type="gene ID" value="BAB42353"/>
</dbReference>
<dbReference type="GeneID" id="98345574"/>
<dbReference type="KEGG" id="sau:SA1101"/>
<dbReference type="HOGENOM" id="CLU_033861_0_0_9"/>
<dbReference type="UniPathway" id="UPA00159">
    <property type="reaction ID" value="UER00275"/>
</dbReference>
<dbReference type="GO" id="GO:0005737">
    <property type="term" value="C:cytoplasm"/>
    <property type="evidence" value="ECO:0007669"/>
    <property type="project" value="UniProtKB-SubCell"/>
</dbReference>
<dbReference type="GO" id="GO:0005524">
    <property type="term" value="F:ATP binding"/>
    <property type="evidence" value="ECO:0007669"/>
    <property type="project" value="UniProtKB-KW"/>
</dbReference>
<dbReference type="GO" id="GO:0033862">
    <property type="term" value="F:UMP kinase activity"/>
    <property type="evidence" value="ECO:0007669"/>
    <property type="project" value="UniProtKB-EC"/>
</dbReference>
<dbReference type="GO" id="GO:0044210">
    <property type="term" value="P:'de novo' CTP biosynthetic process"/>
    <property type="evidence" value="ECO:0007669"/>
    <property type="project" value="UniProtKB-UniRule"/>
</dbReference>
<dbReference type="GO" id="GO:0006225">
    <property type="term" value="P:UDP biosynthetic process"/>
    <property type="evidence" value="ECO:0007669"/>
    <property type="project" value="TreeGrafter"/>
</dbReference>
<dbReference type="CDD" id="cd04254">
    <property type="entry name" value="AAK_UMPK-PyrH-Ec"/>
    <property type="match status" value="1"/>
</dbReference>
<dbReference type="FunFam" id="3.40.1160.10:FF:000001">
    <property type="entry name" value="Uridylate kinase"/>
    <property type="match status" value="1"/>
</dbReference>
<dbReference type="Gene3D" id="3.40.1160.10">
    <property type="entry name" value="Acetylglutamate kinase-like"/>
    <property type="match status" value="1"/>
</dbReference>
<dbReference type="HAMAP" id="MF_01220_B">
    <property type="entry name" value="PyrH_B"/>
    <property type="match status" value="1"/>
</dbReference>
<dbReference type="InterPro" id="IPR036393">
    <property type="entry name" value="AceGlu_kinase-like_sf"/>
</dbReference>
<dbReference type="InterPro" id="IPR001048">
    <property type="entry name" value="Asp/Glu/Uridylate_kinase"/>
</dbReference>
<dbReference type="InterPro" id="IPR011817">
    <property type="entry name" value="Uridylate_kinase"/>
</dbReference>
<dbReference type="InterPro" id="IPR015963">
    <property type="entry name" value="Uridylate_kinase_bac"/>
</dbReference>
<dbReference type="NCBIfam" id="TIGR02075">
    <property type="entry name" value="pyrH_bact"/>
    <property type="match status" value="1"/>
</dbReference>
<dbReference type="PANTHER" id="PTHR42833">
    <property type="entry name" value="URIDYLATE KINASE"/>
    <property type="match status" value="1"/>
</dbReference>
<dbReference type="PANTHER" id="PTHR42833:SF4">
    <property type="entry name" value="URIDYLATE KINASE PUMPKIN, CHLOROPLASTIC"/>
    <property type="match status" value="1"/>
</dbReference>
<dbReference type="Pfam" id="PF00696">
    <property type="entry name" value="AA_kinase"/>
    <property type="match status" value="1"/>
</dbReference>
<dbReference type="PIRSF" id="PIRSF005650">
    <property type="entry name" value="Uridylate_kin"/>
    <property type="match status" value="1"/>
</dbReference>
<dbReference type="SUPFAM" id="SSF53633">
    <property type="entry name" value="Carbamate kinase-like"/>
    <property type="match status" value="1"/>
</dbReference>
<proteinExistence type="evidence at protein level"/>
<name>PYRH_STAAN</name>